<dbReference type="EC" id="3.4.24.28"/>
<dbReference type="EMBL" id="K02497">
    <property type="protein sequence ID" value="AAB05346.1"/>
    <property type="molecule type" value="Genomic_DNA"/>
</dbReference>
<dbReference type="PIR" id="A25415">
    <property type="entry name" value="HYBSN"/>
</dbReference>
<dbReference type="RefSeq" id="WP_014470445.1">
    <property type="nucleotide sequence ID" value="NZ_BSRV01000001.1"/>
</dbReference>
<dbReference type="SMR" id="P06832"/>
<dbReference type="STRING" id="692420.BAMF_1546"/>
<dbReference type="MEROPS" id="M04.014"/>
<dbReference type="eggNOG" id="COG3227">
    <property type="taxonomic scope" value="Bacteria"/>
</dbReference>
<dbReference type="OrthoDB" id="291295at2"/>
<dbReference type="GO" id="GO:0005576">
    <property type="term" value="C:extracellular region"/>
    <property type="evidence" value="ECO:0007669"/>
    <property type="project" value="UniProtKB-SubCell"/>
</dbReference>
<dbReference type="GO" id="GO:0046872">
    <property type="term" value="F:metal ion binding"/>
    <property type="evidence" value="ECO:0007669"/>
    <property type="project" value="UniProtKB-KW"/>
</dbReference>
<dbReference type="GO" id="GO:0004222">
    <property type="term" value="F:metalloendopeptidase activity"/>
    <property type="evidence" value="ECO:0007669"/>
    <property type="project" value="InterPro"/>
</dbReference>
<dbReference type="GO" id="GO:0006508">
    <property type="term" value="P:proteolysis"/>
    <property type="evidence" value="ECO:0007669"/>
    <property type="project" value="UniProtKB-KW"/>
</dbReference>
<dbReference type="CDD" id="cd09597">
    <property type="entry name" value="M4_TLP"/>
    <property type="match status" value="1"/>
</dbReference>
<dbReference type="Gene3D" id="3.10.170.10">
    <property type="match status" value="1"/>
</dbReference>
<dbReference type="Gene3D" id="3.10.450.40">
    <property type="match status" value="1"/>
</dbReference>
<dbReference type="Gene3D" id="3.10.450.490">
    <property type="match status" value="1"/>
</dbReference>
<dbReference type="Gene3D" id="1.10.390.10">
    <property type="entry name" value="Neutral Protease Domain 2"/>
    <property type="match status" value="1"/>
</dbReference>
<dbReference type="InterPro" id="IPR011096">
    <property type="entry name" value="FTP_domain"/>
</dbReference>
<dbReference type="InterPro" id="IPR025711">
    <property type="entry name" value="PepSY"/>
</dbReference>
<dbReference type="InterPro" id="IPR023612">
    <property type="entry name" value="Peptidase_M4"/>
</dbReference>
<dbReference type="InterPro" id="IPR027268">
    <property type="entry name" value="Peptidase_M4/M1_CTD_sf"/>
</dbReference>
<dbReference type="InterPro" id="IPR001570">
    <property type="entry name" value="Peptidase_M4_C_domain"/>
</dbReference>
<dbReference type="InterPro" id="IPR013856">
    <property type="entry name" value="Peptidase_M4_domain"/>
</dbReference>
<dbReference type="InterPro" id="IPR050728">
    <property type="entry name" value="Zinc_Metalloprotease_M4"/>
</dbReference>
<dbReference type="PANTHER" id="PTHR33794">
    <property type="entry name" value="BACILLOLYSIN"/>
    <property type="match status" value="1"/>
</dbReference>
<dbReference type="PANTHER" id="PTHR33794:SF1">
    <property type="entry name" value="BACILLOLYSIN"/>
    <property type="match status" value="1"/>
</dbReference>
<dbReference type="Pfam" id="PF07504">
    <property type="entry name" value="FTP"/>
    <property type="match status" value="1"/>
</dbReference>
<dbReference type="Pfam" id="PF03413">
    <property type="entry name" value="PepSY"/>
    <property type="match status" value="1"/>
</dbReference>
<dbReference type="Pfam" id="PF01447">
    <property type="entry name" value="Peptidase_M4"/>
    <property type="match status" value="1"/>
</dbReference>
<dbReference type="Pfam" id="PF02868">
    <property type="entry name" value="Peptidase_M4_C"/>
    <property type="match status" value="1"/>
</dbReference>
<dbReference type="PRINTS" id="PR00730">
    <property type="entry name" value="THERMOLYSIN"/>
</dbReference>
<dbReference type="SUPFAM" id="SSF55486">
    <property type="entry name" value="Metalloproteases ('zincins'), catalytic domain"/>
    <property type="match status" value="1"/>
</dbReference>
<dbReference type="PROSITE" id="PS00142">
    <property type="entry name" value="ZINC_PROTEASE"/>
    <property type="match status" value="1"/>
</dbReference>
<gene>
    <name type="primary">npr</name>
</gene>
<organism>
    <name type="scientific">Bacillus amyloliquefaciens</name>
    <name type="common">Bacillus velezensis</name>
    <dbReference type="NCBI Taxonomy" id="1390"/>
    <lineage>
        <taxon>Bacteria</taxon>
        <taxon>Bacillati</taxon>
        <taxon>Bacillota</taxon>
        <taxon>Bacilli</taxon>
        <taxon>Bacillales</taxon>
        <taxon>Bacillaceae</taxon>
        <taxon>Bacillus</taxon>
        <taxon>Bacillus amyloliquefaciens group</taxon>
    </lineage>
</organism>
<proteinExistence type="evidence at protein level"/>
<evidence type="ECO:0000255" key="1"/>
<evidence type="ECO:0000255" key="2">
    <source>
        <dbReference type="PROSITE-ProRule" id="PRU10095"/>
    </source>
</evidence>
<evidence type="ECO:0000305" key="3"/>
<keyword id="KW-0106">Calcium</keyword>
<keyword id="KW-0378">Hydrolase</keyword>
<keyword id="KW-0479">Metal-binding</keyword>
<keyword id="KW-0482">Metalloprotease</keyword>
<keyword id="KW-0645">Protease</keyword>
<keyword id="KW-0964">Secreted</keyword>
<keyword id="KW-0732">Signal</keyword>
<keyword id="KW-0862">Zinc</keyword>
<keyword id="KW-0865">Zymogen</keyword>
<protein>
    <recommendedName>
        <fullName>Bacillolysin</fullName>
        <ecNumber>3.4.24.28</ecNumber>
    </recommendedName>
    <alternativeName>
        <fullName>Neutral protease</fullName>
    </alternativeName>
</protein>
<name>NPRE_BACAM</name>
<comment type="function">
    <text>Extracellular zinc metalloprotease.</text>
</comment>
<comment type="catalytic activity">
    <reaction>
        <text>Similar, but not identical, to that of thermolysin.</text>
        <dbReference type="EC" id="3.4.24.28"/>
    </reaction>
</comment>
<comment type="cofactor">
    <cofactor evidence="3">
        <name>Ca(2+)</name>
        <dbReference type="ChEBI" id="CHEBI:29108"/>
    </cofactor>
    <text evidence="3">Binds 4 Ca(2+) ions per subunit.</text>
</comment>
<comment type="cofactor">
    <cofactor evidence="3">
        <name>Zn(2+)</name>
        <dbReference type="ChEBI" id="CHEBI:29105"/>
    </cofactor>
    <text evidence="3">Binds 1 zinc ion per subunit.</text>
</comment>
<comment type="biophysicochemical properties">
    <temperatureDependence>
        <text>Thermolabile.</text>
    </temperatureDependence>
</comment>
<comment type="subcellular location">
    <subcellularLocation>
        <location>Secreted</location>
    </subcellularLocation>
</comment>
<comment type="similarity">
    <text evidence="3">Belongs to the peptidase M4 family.</text>
</comment>
<accession>P06832</accession>
<reference key="1">
    <citation type="journal article" date="1984" name="J. Bacteriol.">
        <title>Genes for alkaline protease and neutral protease from Bacillus amyloliquefaciens contain a large open reading frame between the regions coding for signal sequence and mature protein.</title>
        <authorList>
            <person name="Vasantha N."/>
            <person name="Thompson L.D."/>
            <person name="Rhodes C."/>
            <person name="Banner C."/>
            <person name="Nagle J."/>
            <person name="Filpula D."/>
        </authorList>
    </citation>
    <scope>NUCLEOTIDE SEQUENCE [GENOMIC DNA]</scope>
    <source>
        <strain>ATCC 23844 / P</strain>
    </source>
</reference>
<feature type="signal peptide" evidence="1">
    <location>
        <begin position="1"/>
        <end position="27"/>
    </location>
</feature>
<feature type="propeptide" id="PRO_0000028594" description="Activation peptide">
    <location>
        <begin position="28"/>
        <end position="221"/>
    </location>
</feature>
<feature type="chain" id="PRO_0000028595" description="Bacillolysin">
    <location>
        <begin position="222"/>
        <end position="521"/>
    </location>
</feature>
<feature type="active site" evidence="2">
    <location>
        <position position="365"/>
    </location>
</feature>
<feature type="active site" description="Proton donor" evidence="2">
    <location>
        <position position="449"/>
    </location>
</feature>
<feature type="binding site" evidence="1">
    <location>
        <position position="283"/>
    </location>
    <ligand>
        <name>Ca(2+)</name>
        <dbReference type="ChEBI" id="CHEBI:29108"/>
        <label>1</label>
    </ligand>
</feature>
<feature type="binding site" evidence="1">
    <location>
        <position position="360"/>
    </location>
    <ligand>
        <name>Ca(2+)</name>
        <dbReference type="ChEBI" id="CHEBI:29108"/>
        <label>2</label>
    </ligand>
</feature>
<feature type="binding site" evidence="2">
    <location>
        <position position="364"/>
    </location>
    <ligand>
        <name>Zn(2+)</name>
        <dbReference type="ChEBI" id="CHEBI:29105"/>
        <note>catalytic</note>
    </ligand>
</feature>
<feature type="binding site" evidence="2">
    <location>
        <position position="368"/>
    </location>
    <ligand>
        <name>Zn(2+)</name>
        <dbReference type="ChEBI" id="CHEBI:29105"/>
        <note>catalytic</note>
    </ligand>
</feature>
<feature type="binding site" evidence="2">
    <location>
        <position position="388"/>
    </location>
    <ligand>
        <name>Zn(2+)</name>
        <dbReference type="ChEBI" id="CHEBI:29105"/>
        <note>catalytic</note>
    </ligand>
</feature>
<feature type="binding site" evidence="1">
    <location>
        <position position="399"/>
    </location>
    <ligand>
        <name>Ca(2+)</name>
        <dbReference type="ChEBI" id="CHEBI:29108"/>
        <label>2</label>
    </ligand>
</feature>
<feature type="binding site" evidence="1">
    <location>
        <position position="399"/>
    </location>
    <ligand>
        <name>Ca(2+)</name>
        <dbReference type="ChEBI" id="CHEBI:29108"/>
        <label>3</label>
    </ligand>
</feature>
<feature type="binding site" evidence="1">
    <location>
        <position position="402"/>
    </location>
    <ligand>
        <name>Ca(2+)</name>
        <dbReference type="ChEBI" id="CHEBI:29108"/>
        <label>2</label>
    </ligand>
</feature>
<feature type="binding site" evidence="1">
    <location>
        <position position="402"/>
    </location>
    <ligand>
        <name>Ca(2+)</name>
        <dbReference type="ChEBI" id="CHEBI:29108"/>
        <label>3</label>
    </ligand>
</feature>
<feature type="binding site" evidence="1">
    <location>
        <position position="404"/>
    </location>
    <ligand>
        <name>Ca(2+)</name>
        <dbReference type="ChEBI" id="CHEBI:29108"/>
        <label>2</label>
    </ligand>
</feature>
<feature type="binding site" evidence="1">
    <location>
        <position position="407"/>
    </location>
    <ligand>
        <name>Ca(2+)</name>
        <dbReference type="ChEBI" id="CHEBI:29108"/>
        <label>2</label>
    </ligand>
</feature>
<feature type="binding site" evidence="1">
    <location>
        <position position="407"/>
    </location>
    <ligand>
        <name>Ca(2+)</name>
        <dbReference type="ChEBI" id="CHEBI:29108"/>
        <label>3</label>
    </ligand>
</feature>
<feature type="binding site" evidence="1">
    <location>
        <position position="411"/>
    </location>
    <ligand>
        <name>Ca(2+)</name>
        <dbReference type="ChEBI" id="CHEBI:29108"/>
        <label>4</label>
    </ligand>
</feature>
<sequence>MGLGKKLSVAVAASFMSLTISLPGVQAAENPQLKENLTNFVPKHSLVQSELPSVSDKAIKQYLKQNGKVFKGNPSERLKLIDQTTDDLGYKHFRYVPVVNGVPVKDSQVIIHVDKSNNVYAINGELNNDVSAKTANSKKLSANQALDHAYKAIGKSPEAVSNGTVANKNKAELKAAATKDGKYRLAYDVTIRYIEPEPANWEVTVDAETGKILKKQNKVEHAATTGTGTTLKGKTVSLNISSESGKYVLRDLSKPTGTQIITYDLQNREYNLPGTLVSSTTNQFTTSSQRAAVDAHYNLGKVYDYFYQKFNRNSYDNKGGKIVSSVHYGSRYNNAAWIGDQMIYGDGDGSFFSPLSGSMDVTAHEMTHGVTQETANLNYENQPGALNESFSDVFGYFNDTEDWDIGEDITVSQPALRSLSNPTKYGQPDNFKNYKNLPNTDAGDYGGVHTNSGIPNKAAYNTITKIGVNKAEQIYYRALTVYLTPSSTFKDAKAALIQSARDLYGSQDAASVEAAWNAVGL</sequence>